<reference key="1">
    <citation type="journal article" date="2005" name="Nature">
        <title>Genomic sequence of the pathogenic and allergenic filamentous fungus Aspergillus fumigatus.</title>
        <authorList>
            <person name="Nierman W.C."/>
            <person name="Pain A."/>
            <person name="Anderson M.J."/>
            <person name="Wortman J.R."/>
            <person name="Kim H.S."/>
            <person name="Arroyo J."/>
            <person name="Berriman M."/>
            <person name="Abe K."/>
            <person name="Archer D.B."/>
            <person name="Bermejo C."/>
            <person name="Bennett J.W."/>
            <person name="Bowyer P."/>
            <person name="Chen D."/>
            <person name="Collins M."/>
            <person name="Coulsen R."/>
            <person name="Davies R."/>
            <person name="Dyer P.S."/>
            <person name="Farman M.L."/>
            <person name="Fedorova N."/>
            <person name="Fedorova N.D."/>
            <person name="Feldblyum T.V."/>
            <person name="Fischer R."/>
            <person name="Fosker N."/>
            <person name="Fraser A."/>
            <person name="Garcia J.L."/>
            <person name="Garcia M.J."/>
            <person name="Goble A."/>
            <person name="Goldman G.H."/>
            <person name="Gomi K."/>
            <person name="Griffith-Jones S."/>
            <person name="Gwilliam R."/>
            <person name="Haas B.J."/>
            <person name="Haas H."/>
            <person name="Harris D.E."/>
            <person name="Horiuchi H."/>
            <person name="Huang J."/>
            <person name="Humphray S."/>
            <person name="Jimenez J."/>
            <person name="Keller N."/>
            <person name="Khouri H."/>
            <person name="Kitamoto K."/>
            <person name="Kobayashi T."/>
            <person name="Konzack S."/>
            <person name="Kulkarni R."/>
            <person name="Kumagai T."/>
            <person name="Lafton A."/>
            <person name="Latge J.-P."/>
            <person name="Li W."/>
            <person name="Lord A."/>
            <person name="Lu C."/>
            <person name="Majoros W.H."/>
            <person name="May G.S."/>
            <person name="Miller B.L."/>
            <person name="Mohamoud Y."/>
            <person name="Molina M."/>
            <person name="Monod M."/>
            <person name="Mouyna I."/>
            <person name="Mulligan S."/>
            <person name="Murphy L.D."/>
            <person name="O'Neil S."/>
            <person name="Paulsen I."/>
            <person name="Penalva M.A."/>
            <person name="Pertea M."/>
            <person name="Price C."/>
            <person name="Pritchard B.L."/>
            <person name="Quail M.A."/>
            <person name="Rabbinowitsch E."/>
            <person name="Rawlins N."/>
            <person name="Rajandream M.A."/>
            <person name="Reichard U."/>
            <person name="Renauld H."/>
            <person name="Robson G.D."/>
            <person name="Rodriguez de Cordoba S."/>
            <person name="Rodriguez-Pena J.M."/>
            <person name="Ronning C.M."/>
            <person name="Rutter S."/>
            <person name="Salzberg S.L."/>
            <person name="Sanchez M."/>
            <person name="Sanchez-Ferrero J.C."/>
            <person name="Saunders D."/>
            <person name="Seeger K."/>
            <person name="Squares R."/>
            <person name="Squares S."/>
            <person name="Takeuchi M."/>
            <person name="Tekaia F."/>
            <person name="Turner G."/>
            <person name="Vazquez de Aldana C.R."/>
            <person name="Weidman J."/>
            <person name="White O."/>
            <person name="Woodward J.R."/>
            <person name="Yu J.-H."/>
            <person name="Fraser C.M."/>
            <person name="Galagan J.E."/>
            <person name="Asai K."/>
            <person name="Machida M."/>
            <person name="Hall N."/>
            <person name="Barrell B.G."/>
            <person name="Denning D.W."/>
        </authorList>
    </citation>
    <scope>NUCLEOTIDE SEQUENCE [LARGE SCALE GENOMIC DNA]</scope>
    <source>
        <strain>ATCC MYA-4609 / CBS 101355 / FGSC A1100 / Af293</strain>
    </source>
</reference>
<accession>Q4WNA5</accession>
<gene>
    <name type="primary">atg5</name>
    <name type="ORF">AFUA_6G07040</name>
</gene>
<sequence>MRTSSMMENQVSLSSIQRAVWDGKLPLQITLASSESRTYDQTDPYLIACPRISYLPSLLPRLRAFFSPSLIEPNSQPHEGWFSFEGVPLKWHLPVGLLYDLYAGADPASKGTRVDETDHPTSSLNDTLPWRLTVHFSDWPDEELVRLDADGMVMHDAFINSVKEADFLRNGTAKGIMTLSKEDSAGLWQAVQDVDLLSFQRISNILLPPPNQPFRNVPIRFFLPLSPDSGSPSLKVVQSPLPPNIPATTNTSQSTNLRHSPATQVQTLGSALHSLLPNLFPSRRTPVLAKPVLHGAAVPMSAPIEELVRSCAYGDGWVYIVIRMMG</sequence>
<proteinExistence type="inferred from homology"/>
<name>ATG5_ASPFU</name>
<keyword id="KW-0072">Autophagy</keyword>
<keyword id="KW-1017">Isopeptide bond</keyword>
<keyword id="KW-0472">Membrane</keyword>
<keyword id="KW-0653">Protein transport</keyword>
<keyword id="KW-1185">Reference proteome</keyword>
<keyword id="KW-0813">Transport</keyword>
<keyword id="KW-0832">Ubl conjugation</keyword>
<organism>
    <name type="scientific">Aspergillus fumigatus (strain ATCC MYA-4609 / CBS 101355 / FGSC A1100 / Af293)</name>
    <name type="common">Neosartorya fumigata</name>
    <dbReference type="NCBI Taxonomy" id="330879"/>
    <lineage>
        <taxon>Eukaryota</taxon>
        <taxon>Fungi</taxon>
        <taxon>Dikarya</taxon>
        <taxon>Ascomycota</taxon>
        <taxon>Pezizomycotina</taxon>
        <taxon>Eurotiomycetes</taxon>
        <taxon>Eurotiomycetidae</taxon>
        <taxon>Eurotiales</taxon>
        <taxon>Aspergillaceae</taxon>
        <taxon>Aspergillus</taxon>
        <taxon>Aspergillus subgen. Fumigati</taxon>
    </lineage>
</organism>
<evidence type="ECO:0000250" key="1"/>
<evidence type="ECO:0000305" key="2"/>
<dbReference type="EMBL" id="AAHF01000006">
    <property type="protein sequence ID" value="EAL88559.1"/>
    <property type="molecule type" value="Genomic_DNA"/>
</dbReference>
<dbReference type="RefSeq" id="XP_750597.1">
    <property type="nucleotide sequence ID" value="XM_745504.1"/>
</dbReference>
<dbReference type="SMR" id="Q4WNA5"/>
<dbReference type="FunCoup" id="Q4WNA5">
    <property type="interactions" value="329"/>
</dbReference>
<dbReference type="STRING" id="330879.Q4WNA5"/>
<dbReference type="EnsemblFungi" id="EAL88559">
    <property type="protein sequence ID" value="EAL88559"/>
    <property type="gene ID" value="AFUA_6G07040"/>
</dbReference>
<dbReference type="GeneID" id="3508752"/>
<dbReference type="KEGG" id="afm:AFUA_6G07040"/>
<dbReference type="VEuPathDB" id="FungiDB:Afu6g07040"/>
<dbReference type="eggNOG" id="KOG2976">
    <property type="taxonomic scope" value="Eukaryota"/>
</dbReference>
<dbReference type="HOGENOM" id="CLU_051894_2_0_1"/>
<dbReference type="InParanoid" id="Q4WNA5"/>
<dbReference type="OMA" id="SIQKAVW"/>
<dbReference type="OrthoDB" id="272162at2759"/>
<dbReference type="Proteomes" id="UP000002530">
    <property type="component" value="Chromosome 6"/>
</dbReference>
<dbReference type="GO" id="GO:0034274">
    <property type="term" value="C:Atg12-Atg5-Atg16 complex"/>
    <property type="evidence" value="ECO:0000318"/>
    <property type="project" value="GO_Central"/>
</dbReference>
<dbReference type="GO" id="GO:0005776">
    <property type="term" value="C:autophagosome"/>
    <property type="evidence" value="ECO:0000318"/>
    <property type="project" value="GO_Central"/>
</dbReference>
<dbReference type="GO" id="GO:0061908">
    <property type="term" value="C:phagophore"/>
    <property type="evidence" value="ECO:0000318"/>
    <property type="project" value="GO_Central"/>
</dbReference>
<dbReference type="GO" id="GO:0034045">
    <property type="term" value="C:phagophore assembly site membrane"/>
    <property type="evidence" value="ECO:0000318"/>
    <property type="project" value="GO_Central"/>
</dbReference>
<dbReference type="GO" id="GO:0035973">
    <property type="term" value="P:aggrephagy"/>
    <property type="evidence" value="ECO:0000318"/>
    <property type="project" value="GO_Central"/>
</dbReference>
<dbReference type="GO" id="GO:0000045">
    <property type="term" value="P:autophagosome assembly"/>
    <property type="evidence" value="ECO:0000318"/>
    <property type="project" value="GO_Central"/>
</dbReference>
<dbReference type="GO" id="GO:0006995">
    <property type="term" value="P:cellular response to nitrogen starvation"/>
    <property type="evidence" value="ECO:0000318"/>
    <property type="project" value="GO_Central"/>
</dbReference>
<dbReference type="GO" id="GO:0000423">
    <property type="term" value="P:mitophagy"/>
    <property type="evidence" value="ECO:0000318"/>
    <property type="project" value="GO_Central"/>
</dbReference>
<dbReference type="GO" id="GO:0034727">
    <property type="term" value="P:piecemeal microautophagy of the nucleus"/>
    <property type="evidence" value="ECO:0000318"/>
    <property type="project" value="GO_Central"/>
</dbReference>
<dbReference type="GO" id="GO:0015031">
    <property type="term" value="P:protein transport"/>
    <property type="evidence" value="ECO:0007669"/>
    <property type="project" value="UniProtKB-KW"/>
</dbReference>
<dbReference type="FunFam" id="1.10.246.190:FF:000004">
    <property type="entry name" value="Autophagy protein 5"/>
    <property type="match status" value="1"/>
</dbReference>
<dbReference type="FunFam" id="3.10.20.620:FF:000004">
    <property type="entry name" value="Autophagy protein 5"/>
    <property type="match status" value="1"/>
</dbReference>
<dbReference type="FunFam" id="3.10.20.90:FF:000290">
    <property type="entry name" value="Autophagy protein 5"/>
    <property type="match status" value="1"/>
</dbReference>
<dbReference type="Gene3D" id="3.10.20.620">
    <property type="match status" value="1"/>
</dbReference>
<dbReference type="Gene3D" id="1.10.246.190">
    <property type="entry name" value="Autophagy protein Apg5, helix rich domain"/>
    <property type="match status" value="1"/>
</dbReference>
<dbReference type="Gene3D" id="3.10.20.90">
    <property type="entry name" value="Phosphatidylinositol 3-kinase Catalytic Subunit, Chain A, domain 1"/>
    <property type="match status" value="1"/>
</dbReference>
<dbReference type="InterPro" id="IPR007239">
    <property type="entry name" value="Atg5"/>
</dbReference>
<dbReference type="InterPro" id="IPR048940">
    <property type="entry name" value="ATG5_HBR"/>
</dbReference>
<dbReference type="InterPro" id="IPR042526">
    <property type="entry name" value="Atg5_HR"/>
</dbReference>
<dbReference type="InterPro" id="IPR048939">
    <property type="entry name" value="ATG5_UblA"/>
</dbReference>
<dbReference type="InterPro" id="IPR042527">
    <property type="entry name" value="Atg5_UblA_dom_sf"/>
</dbReference>
<dbReference type="InterPro" id="IPR048318">
    <property type="entry name" value="ATG5_UblB"/>
</dbReference>
<dbReference type="PANTHER" id="PTHR13040">
    <property type="entry name" value="AUTOPHAGY PROTEIN 5"/>
    <property type="match status" value="1"/>
</dbReference>
<dbReference type="PANTHER" id="PTHR13040:SF2">
    <property type="entry name" value="AUTOPHAGY PROTEIN 5"/>
    <property type="match status" value="1"/>
</dbReference>
<dbReference type="Pfam" id="PF20637">
    <property type="entry name" value="ATG5_HBR"/>
    <property type="match status" value="1"/>
</dbReference>
<dbReference type="Pfam" id="PF20638">
    <property type="entry name" value="ATG5_UblA"/>
    <property type="match status" value="1"/>
</dbReference>
<dbReference type="Pfam" id="PF04106">
    <property type="entry name" value="ATG5_UblB"/>
    <property type="match status" value="1"/>
</dbReference>
<protein>
    <recommendedName>
        <fullName>Autophagy protein 5</fullName>
    </recommendedName>
</protein>
<comment type="function">
    <text evidence="1">Involved in cytoplasm to vacuole transport (Cvt) and autophagic vesicle formation. Autophagy is essential for maintenance of amino acid levels and protein synthesis under nitrogen starvation. Required for selective autophagic degradation of the nucleus (nucleophagy). Also required for mitophagy, which eliminates defective or superfluous mitochondria in order to fulfill cellular energy requirements and prevent excess ROS production. Conjugation with atg12, through a ubiquitin-like conjugating system involving atg7 as an E1-like activating enzyme and atg10 as an E2-like conjugating enzyme, is essential for its function. The atg12-atg5 conjugate acts as an E3-like enzyme which is required for lipidation of atg8 and atg8 association to the vesicle membranes (By similarity).</text>
</comment>
<comment type="subunit">
    <text evidence="1">Conjugated with atg12.</text>
</comment>
<comment type="subcellular location">
    <subcellularLocation>
        <location evidence="1">Preautophagosomal structure membrane</location>
        <topology evidence="1">Peripheral membrane protein</topology>
    </subcellularLocation>
</comment>
<comment type="PTM">
    <text evidence="1">Conjugated to atg12; which is essential for autophagy.</text>
</comment>
<comment type="similarity">
    <text evidence="2">Belongs to the ATG5 family.</text>
</comment>
<feature type="chain" id="PRO_0000317850" description="Autophagy protein 5">
    <location>
        <begin position="1"/>
        <end position="326"/>
    </location>
</feature>
<feature type="cross-link" description="Glycyl lysine isopeptide (Lys-Gly) (interchain with G-Cter in atg12)" evidence="1">
    <location>
        <position position="163"/>
    </location>
</feature>